<feature type="transit peptide" description="Mitochondrion" evidence="2">
    <location>
        <begin position="1"/>
        <end position="43"/>
    </location>
</feature>
<feature type="chain" id="PRO_0000001055" description="NAD(P) transhydrogenase, mitochondrial">
    <location>
        <begin position="44"/>
        <end position="1086"/>
    </location>
</feature>
<feature type="topological domain" description="Mitochondrial matrix" evidence="2">
    <location>
        <begin position="44"/>
        <end position="474"/>
    </location>
</feature>
<feature type="transmembrane region" description="Helical" evidence="6">
    <location>
        <begin position="475"/>
        <end position="493"/>
    </location>
</feature>
<feature type="transmembrane region" description="Helical" evidence="6">
    <location>
        <begin position="501"/>
        <end position="521"/>
    </location>
</feature>
<feature type="transmembrane region" description="Helical" evidence="6">
    <location>
        <begin position="527"/>
        <end position="546"/>
    </location>
</feature>
<feature type="transmembrane region" description="Helical" evidence="6">
    <location>
        <begin position="558"/>
        <end position="578"/>
    </location>
</feature>
<feature type="topological domain" description="Mitochondrial matrix" evidence="2">
    <location>
        <begin position="579"/>
        <end position="595"/>
    </location>
</feature>
<feature type="transmembrane region" description="Helical" evidence="6">
    <location>
        <begin position="596"/>
        <end position="616"/>
    </location>
</feature>
<feature type="transmembrane region" description="Helical" evidence="6">
    <location>
        <begin position="622"/>
        <end position="642"/>
    </location>
</feature>
<feature type="transmembrane region" description="Helical" evidence="6">
    <location>
        <begin position="646"/>
        <end position="666"/>
    </location>
</feature>
<feature type="transmembrane region" description="Helical" evidence="6">
    <location>
        <begin position="672"/>
        <end position="691"/>
    </location>
</feature>
<feature type="transmembrane region" description="Helical" evidence="6">
    <location>
        <begin position="702"/>
        <end position="722"/>
    </location>
</feature>
<feature type="topological domain" description="Cytoplasmic" evidence="2">
    <location>
        <begin position="723"/>
        <end position="739"/>
    </location>
</feature>
<feature type="transmembrane region" description="Helical" evidence="6">
    <location>
        <begin position="740"/>
        <end position="760"/>
    </location>
</feature>
<feature type="transmembrane region" description="Helical" evidence="6">
    <location>
        <begin position="778"/>
        <end position="797"/>
    </location>
</feature>
<feature type="transmembrane region" description="Helical" evidence="6">
    <location>
        <begin position="801"/>
        <end position="819"/>
    </location>
</feature>
<feature type="transmembrane region" description="Helical" evidence="6">
    <location>
        <begin position="833"/>
        <end position="853"/>
    </location>
</feature>
<feature type="transmembrane region" description="Helical" evidence="6">
    <location>
        <begin position="857"/>
        <end position="879"/>
    </location>
</feature>
<feature type="topological domain" description="Mitochondrial matrix" evidence="2">
    <location>
        <begin position="880"/>
        <end position="1086"/>
    </location>
</feature>
<feature type="binding site" evidence="1">
    <location>
        <begin position="182"/>
        <end position="184"/>
    </location>
    <ligand>
        <name>NAD(+)</name>
        <dbReference type="ChEBI" id="CHEBI:57540"/>
    </ligand>
</feature>
<feature type="binding site" evidence="1">
    <location>
        <position position="237"/>
    </location>
    <ligand>
        <name>NAD(+)</name>
        <dbReference type="ChEBI" id="CHEBI:57540"/>
    </ligand>
</feature>
<feature type="binding site" evidence="1">
    <location>
        <begin position="257"/>
        <end position="259"/>
    </location>
    <ligand>
        <name>NAD(+)</name>
        <dbReference type="ChEBI" id="CHEBI:57540"/>
    </ligand>
</feature>
<feature type="binding site" evidence="5">
    <location>
        <position position="287"/>
    </location>
    <ligand>
        <name>NAD(+)</name>
        <dbReference type="ChEBI" id="CHEBI:57540"/>
    </ligand>
</feature>
<feature type="binding site" evidence="1">
    <location>
        <position position="300"/>
    </location>
    <ligand>
        <name>NAD(+)</name>
        <dbReference type="ChEBI" id="CHEBI:57540"/>
    </ligand>
</feature>
<feature type="binding site" evidence="1">
    <location>
        <position position="319"/>
    </location>
    <ligand>
        <name>NAD(+)</name>
        <dbReference type="ChEBI" id="CHEBI:57540"/>
    </ligand>
</feature>
<feature type="binding site" evidence="7 8 9 12 13 14">
    <location>
        <position position="933"/>
    </location>
    <ligand>
        <name>NADP(+)</name>
        <dbReference type="ChEBI" id="CHEBI:58349"/>
    </ligand>
</feature>
<feature type="binding site" evidence="7 8 9 12 13 14">
    <location>
        <begin position="965"/>
        <end position="970"/>
    </location>
    <ligand>
        <name>NADP(+)</name>
        <dbReference type="ChEBI" id="CHEBI:58349"/>
    </ligand>
</feature>
<feature type="binding site" evidence="7 8 9 12 13 14">
    <location>
        <begin position="1007"/>
        <end position="1011"/>
    </location>
    <ligand>
        <name>NADP(+)</name>
        <dbReference type="ChEBI" id="CHEBI:58349"/>
    </ligand>
</feature>
<feature type="binding site" evidence="7 9 12 14">
    <location>
        <begin position="1026"/>
        <end position="1027"/>
    </location>
    <ligand>
        <name>NADP(+)</name>
        <dbReference type="ChEBI" id="CHEBI:58349"/>
    </ligand>
</feature>
<feature type="binding site" evidence="7 8 9 12 13 14">
    <location>
        <begin position="1042"/>
        <end position="1049"/>
    </location>
    <ligand>
        <name>NADP(+)</name>
        <dbReference type="ChEBI" id="CHEBI:58349"/>
    </ligand>
</feature>
<feature type="binding site" evidence="7 8 9 12 13 14">
    <location>
        <begin position="1068"/>
        <end position="1069"/>
    </location>
    <ligand>
        <name>NADP(+)</name>
        <dbReference type="ChEBI" id="CHEBI:58349"/>
    </ligand>
</feature>
<feature type="modified residue" description="N6-acetyllysine" evidence="15">
    <location>
        <position position="70"/>
    </location>
</feature>
<feature type="modified residue" description="N6-succinyllysine" evidence="4">
    <location>
        <position position="117"/>
    </location>
</feature>
<feature type="modified residue" description="N6-succinyllysine" evidence="4">
    <location>
        <position position="224"/>
    </location>
</feature>
<feature type="modified residue" description="N6-succinyllysine" evidence="4">
    <location>
        <position position="294"/>
    </location>
</feature>
<feature type="modified residue" description="N6-succinyllysine" evidence="4">
    <location>
        <position position="331"/>
    </location>
</feature>
<feature type="modified residue" description="N6-acetyllysine" evidence="15">
    <location>
        <position position="397"/>
    </location>
</feature>
<feature type="modified residue" description="N6-succinyllysine" evidence="4">
    <location>
        <position position="1079"/>
    </location>
</feature>
<feature type="sequence variant" id="VAR_068781" description="In GCCD4; dbSNP:rs867004061." evidence="10">
    <original>S</original>
    <variation>N</variation>
    <location>
        <position position="193"/>
    </location>
</feature>
<feature type="sequence variant" id="VAR_068782" description="In GCCD4; dbSNP:rs1447408865." evidence="10">
    <original>T</original>
    <variation>A</variation>
    <location>
        <position position="357"/>
    </location>
</feature>
<feature type="sequence variant" id="VAR_068783" description="In GCCD4." evidence="10">
    <original>H</original>
    <variation>P</variation>
    <location>
        <position position="365"/>
    </location>
</feature>
<feature type="sequence variant" id="VAR_068784" description="In GCCD4; dbSNP:rs781183677." evidence="10">
    <original>P</original>
    <variation>L</variation>
    <location>
        <position position="437"/>
    </location>
</feature>
<feature type="sequence variant" id="VAR_068785" description="In GCCD4; dbSNP:rs387907232." evidence="10">
    <original>A</original>
    <variation>V</variation>
    <location>
        <position position="533"/>
    </location>
</feature>
<feature type="sequence variant" id="VAR_068786" description="In GCCD4; dbSNP:rs371979800." evidence="10">
    <original>G</original>
    <variation>R</variation>
    <location>
        <position position="664"/>
    </location>
</feature>
<feature type="sequence variant" id="VAR_068787" description="In GCCD4." evidence="10">
    <original>G</original>
    <variation>R</variation>
    <location>
        <position position="678"/>
    </location>
</feature>
<feature type="sequence variant" id="VAR_068788" description="In GCCD4; dbSNP:rs1474421419." evidence="10">
    <original>G</original>
    <variation>D</variation>
    <location>
        <position position="862"/>
    </location>
</feature>
<feature type="sequence variant" id="VAR_068789" description="In GCCD4; dbSNP:rs387907233." evidence="10">
    <original>L</original>
    <variation>P</variation>
    <location>
        <position position="977"/>
    </location>
</feature>
<feature type="sequence variant" id="VAR_068790" description="In GCCD4; dbSNP:rs387907234." evidence="10">
    <original>A</original>
    <variation>P</variation>
    <location>
        <position position="1008"/>
    </location>
</feature>
<feature type="sequence variant" id="VAR_068791" description="In GCCD4; dbSNP:rs370273690." evidence="10">
    <original>N</original>
    <variation>K</variation>
    <location>
        <position position="1009"/>
    </location>
</feature>
<feature type="sequence conflict" description="In Ref. 2; CAA90428." evidence="11" ref="2">
    <original>A</original>
    <variation>T</variation>
    <location>
        <position position="176"/>
    </location>
</feature>
<feature type="sequence conflict" description="In Ref. 3; CAD38536." evidence="11" ref="3">
    <original>G</original>
    <variation>E</variation>
    <location>
        <position position="212"/>
    </location>
</feature>
<feature type="sequence conflict" description="In Ref. 1; AAC51914." evidence="11" ref="1">
    <original>A</original>
    <variation>E</variation>
    <location>
        <position position="246"/>
    </location>
</feature>
<feature type="sequence conflict" description="In Ref. 1; AAC51914." evidence="11" ref="1">
    <original>A</original>
    <variation>S</variation>
    <location>
        <position position="262"/>
    </location>
</feature>
<feature type="sequence conflict" description="In Ref. 1; AAC51914." evidence="11" ref="1">
    <original>F</original>
    <variation>S</variation>
    <location>
        <position position="706"/>
    </location>
</feature>
<feature type="sequence conflict" description="In Ref. 1; AAC51914." evidence="11" ref="1">
    <original>T</original>
    <variation>P</variation>
    <location>
        <position position="731"/>
    </location>
</feature>
<feature type="sequence conflict" description="In Ref. 2; CAA90428." evidence="11" ref="2">
    <original>S</original>
    <variation>A</variation>
    <location>
        <position position="810"/>
    </location>
</feature>
<feature type="sequence conflict" description="In Ref. 2; CAA90428." evidence="11" ref="2">
    <original>A</original>
    <variation>P</variation>
    <location>
        <position position="824"/>
    </location>
</feature>
<feature type="sequence conflict" description="In Ref. 1; AAC51914." evidence="11" ref="1">
    <original>I</original>
    <variation>P</variation>
    <location>
        <position position="871"/>
    </location>
</feature>
<feature type="sequence conflict" description="In Ref. 1; AAC51914." evidence="11" ref="1">
    <original>I</original>
    <variation>F</variation>
    <location>
        <position position="929"/>
    </location>
</feature>
<feature type="sequence conflict" description="In Ref. 3; CAD38536." evidence="11" ref="3">
    <original>K</original>
    <variation>R</variation>
    <location>
        <position position="1059"/>
    </location>
</feature>
<feature type="helix" evidence="16">
    <location>
        <begin position="914"/>
        <end position="923"/>
    </location>
</feature>
<feature type="strand" evidence="16">
    <location>
        <begin position="925"/>
        <end position="931"/>
    </location>
</feature>
<feature type="helix" evidence="16">
    <location>
        <begin position="933"/>
        <end position="938"/>
    </location>
</feature>
<feature type="helix" evidence="16">
    <location>
        <begin position="941"/>
        <end position="953"/>
    </location>
</feature>
<feature type="strand" evidence="16">
    <location>
        <begin position="957"/>
        <end position="962"/>
    </location>
</feature>
<feature type="strand" evidence="16">
    <location>
        <begin position="967"/>
        <end position="969"/>
    </location>
</feature>
<feature type="helix" evidence="16">
    <location>
        <begin position="972"/>
        <end position="979"/>
    </location>
</feature>
<feature type="helix" evidence="16">
    <location>
        <begin position="984"/>
        <end position="986"/>
    </location>
</feature>
<feature type="strand" evidence="16">
    <location>
        <begin position="987"/>
        <end position="989"/>
    </location>
</feature>
<feature type="helix" evidence="16">
    <location>
        <begin position="990"/>
        <end position="993"/>
    </location>
</feature>
<feature type="helix" evidence="16">
    <location>
        <begin position="994"/>
        <end position="999"/>
    </location>
</feature>
<feature type="strand" evidence="16">
    <location>
        <begin position="1001"/>
        <end position="1007"/>
    </location>
</feature>
<feature type="helix" evidence="16">
    <location>
        <begin position="1010"/>
        <end position="1012"/>
    </location>
</feature>
<feature type="helix" evidence="16">
    <location>
        <begin position="1015"/>
        <end position="1018"/>
    </location>
</feature>
<feature type="turn" evidence="16">
    <location>
        <begin position="1023"/>
        <end position="1026"/>
    </location>
</feature>
<feature type="helix" evidence="16">
    <location>
        <begin position="1032"/>
        <end position="1034"/>
    </location>
</feature>
<feature type="strand" evidence="16">
    <location>
        <begin position="1035"/>
        <end position="1045"/>
    </location>
</feature>
<feature type="helix" evidence="16">
    <location>
        <begin position="1055"/>
        <end position="1058"/>
    </location>
</feature>
<feature type="strand" evidence="16">
    <location>
        <begin position="1062"/>
        <end position="1067"/>
    </location>
</feature>
<feature type="helix" evidence="16">
    <location>
        <begin position="1069"/>
        <end position="1081"/>
    </location>
</feature>
<organism>
    <name type="scientific">Homo sapiens</name>
    <name type="common">Human</name>
    <dbReference type="NCBI Taxonomy" id="9606"/>
    <lineage>
        <taxon>Eukaryota</taxon>
        <taxon>Metazoa</taxon>
        <taxon>Chordata</taxon>
        <taxon>Craniata</taxon>
        <taxon>Vertebrata</taxon>
        <taxon>Euteleostomi</taxon>
        <taxon>Mammalia</taxon>
        <taxon>Eutheria</taxon>
        <taxon>Euarchontoglires</taxon>
        <taxon>Primates</taxon>
        <taxon>Haplorrhini</taxon>
        <taxon>Catarrhini</taxon>
        <taxon>Hominidae</taxon>
        <taxon>Homo</taxon>
    </lineage>
</organism>
<comment type="function">
    <text evidence="1 10">The transhydrogenation between NADH and NADP is coupled to respiration and ATP hydrolysis and functions as a proton pump across the membrane (By similarity). May play a role in reactive oxygen species (ROS) detoxification in the adrenal gland (PubMed:22634753).</text>
</comment>
<comment type="catalytic activity">
    <reaction evidence="3">
        <text>NAD(+) + NADPH + H(+)(in) = NADH + NADP(+) + H(+)(out)</text>
        <dbReference type="Rhea" id="RHEA:47992"/>
        <dbReference type="ChEBI" id="CHEBI:15378"/>
        <dbReference type="ChEBI" id="CHEBI:57540"/>
        <dbReference type="ChEBI" id="CHEBI:57783"/>
        <dbReference type="ChEBI" id="CHEBI:57945"/>
        <dbReference type="ChEBI" id="CHEBI:58349"/>
        <dbReference type="EC" id="7.1.1.1"/>
    </reaction>
</comment>
<comment type="subunit">
    <text evidence="2">Homodimer.</text>
</comment>
<comment type="subcellular location">
    <subcellularLocation>
        <location evidence="11">Mitochondrion inner membrane</location>
        <topology evidence="11">Multi-pass membrane protein</topology>
        <orientation evidence="11">Matrix side</orientation>
    </subcellularLocation>
</comment>
<comment type="tissue specificity">
    <text evidence="10">Widely expressed with expression most readily detectable in adrenal, heart, kidney, thyroid and adipose tissues.</text>
</comment>
<comment type="disease" evidence="10">
    <disease id="DI-03501">
        <name>Glucocorticoid deficiency 4 with or without mineralocorticoid deficiency</name>
        <acronym>GCCD4</acronym>
        <description>A form of glucocorticoid deficiency, a rare autosomal recessive disorder characterized by resistance to ACTH action on the adrenal cortex, adrenal insufficiency and an inability of the adrenal cortex to produce cortisol. It usually presents in the neonatal period or in early childhood with episodes of hypoglycemia and other symptoms related to cortisol deficiency, including failure to thrive, recurrent illnesses or infections, convulsions, and shock. In a small number of patients hypoglycemia can be sufficiently severe and persistent that it leads to serious long-term neurological damage or death. The diagnosis is readily confirmed with a low plasma cortisol measurement in the presence of an elevated ACTH level, and normal aldosterone and plasma renin measurements.</description>
        <dbReference type="MIM" id="614736"/>
    </disease>
    <text>The disease is caused by variants affecting the gene represented in this entry.</text>
</comment>
<comment type="similarity">
    <text evidence="11">In the N-terminal section; belongs to the AlaDH/PNT family.</text>
</comment>
<comment type="similarity">
    <text evidence="11">In the C-terminal section; belongs to the PNT beta subunit family.</text>
</comment>
<evidence type="ECO:0000250" key="1">
    <source>
        <dbReference type="UniProtKB" id="P07001"/>
    </source>
</evidence>
<evidence type="ECO:0000250" key="2">
    <source>
        <dbReference type="UniProtKB" id="P11024"/>
    </source>
</evidence>
<evidence type="ECO:0000250" key="3">
    <source>
        <dbReference type="UniProtKB" id="Q2RSB2"/>
    </source>
</evidence>
<evidence type="ECO:0000250" key="4">
    <source>
        <dbReference type="UniProtKB" id="Q61941"/>
    </source>
</evidence>
<evidence type="ECO:0000250" key="5">
    <source>
        <dbReference type="UniProtKB" id="W5PFI3"/>
    </source>
</evidence>
<evidence type="ECO:0000255" key="6"/>
<evidence type="ECO:0000269" key="7">
    <source>
    </source>
</evidence>
<evidence type="ECO:0000269" key="8">
    <source>
    </source>
</evidence>
<evidence type="ECO:0000269" key="9">
    <source>
    </source>
</evidence>
<evidence type="ECO:0000269" key="10">
    <source>
    </source>
</evidence>
<evidence type="ECO:0000305" key="11"/>
<evidence type="ECO:0007744" key="12">
    <source>
        <dbReference type="PDB" id="1DJL"/>
    </source>
</evidence>
<evidence type="ECO:0007744" key="13">
    <source>
        <dbReference type="PDB" id="1PT9"/>
    </source>
</evidence>
<evidence type="ECO:0007744" key="14">
    <source>
        <dbReference type="PDB" id="1U31"/>
    </source>
</evidence>
<evidence type="ECO:0007744" key="15">
    <source>
    </source>
</evidence>
<evidence type="ECO:0007829" key="16">
    <source>
        <dbReference type="PDB" id="1DJL"/>
    </source>
</evidence>
<name>NNTM_HUMAN</name>
<reference key="1">
    <citation type="journal article" date="1997" name="DNA Seq.">
        <title>Cloning and deduced amino acid sequence of human nicotinamide nucleotide transhydrogenase.</title>
        <authorList>
            <person name="Ware J."/>
            <person name="Zieger B."/>
        </authorList>
    </citation>
    <scope>NUCLEOTIDE SEQUENCE [MRNA]</scope>
</reference>
<reference key="2">
    <citation type="journal article" date="1996" name="Biochim. Biophys. Acta">
        <title>The cDNA sequence of proton-pumping nicotinamide nucleotide transhydrogenase from man and mouse.</title>
        <authorList>
            <person name="Lagberg E.M."/>
            <person name="Betsholtz C."/>
            <person name="Rydstrom J."/>
        </authorList>
    </citation>
    <scope>NUCLEOTIDE SEQUENCE [MRNA]</scope>
    <source>
        <tissue>Heart</tissue>
    </source>
</reference>
<reference key="3">
    <citation type="journal article" date="2007" name="BMC Genomics">
        <title>The full-ORF clone resource of the German cDNA consortium.</title>
        <authorList>
            <person name="Bechtel S."/>
            <person name="Rosenfelder H."/>
            <person name="Duda A."/>
            <person name="Schmidt C.P."/>
            <person name="Ernst U."/>
            <person name="Wellenreuther R."/>
            <person name="Mehrle A."/>
            <person name="Schuster C."/>
            <person name="Bahr A."/>
            <person name="Bloecker H."/>
            <person name="Heubner D."/>
            <person name="Hoerlein A."/>
            <person name="Michel G."/>
            <person name="Wedler H."/>
            <person name="Koehrer K."/>
            <person name="Ottenwaelder B."/>
            <person name="Poustka A."/>
            <person name="Wiemann S."/>
            <person name="Schupp I."/>
        </authorList>
    </citation>
    <scope>NUCLEOTIDE SEQUENCE [LARGE SCALE MRNA]</scope>
    <source>
        <tissue>Skeletal muscle</tissue>
    </source>
</reference>
<reference key="4">
    <citation type="journal article" date="2004" name="Genome Res.">
        <title>The status, quality, and expansion of the NIH full-length cDNA project: the Mammalian Gene Collection (MGC).</title>
        <authorList>
            <consortium name="The MGC Project Team"/>
        </authorList>
    </citation>
    <scope>NUCLEOTIDE SEQUENCE [LARGE SCALE MRNA]</scope>
</reference>
<reference key="5">
    <citation type="journal article" date="2009" name="Science">
        <title>Lysine acetylation targets protein complexes and co-regulates major cellular functions.</title>
        <authorList>
            <person name="Choudhary C."/>
            <person name="Kumar C."/>
            <person name="Gnad F."/>
            <person name="Nielsen M.L."/>
            <person name="Rehman M."/>
            <person name="Walther T.C."/>
            <person name="Olsen J.V."/>
            <person name="Mann M."/>
        </authorList>
    </citation>
    <scope>ACETYLATION [LARGE SCALE ANALYSIS] AT LYS-70 AND LYS-397</scope>
    <scope>IDENTIFICATION BY MASS SPECTROMETRY [LARGE SCALE ANALYSIS]</scope>
</reference>
<reference key="6">
    <citation type="journal article" date="2011" name="BMC Syst. Biol.">
        <title>Initial characterization of the human central proteome.</title>
        <authorList>
            <person name="Burkard T.R."/>
            <person name="Planyavsky M."/>
            <person name="Kaupe I."/>
            <person name="Breitwieser F.P."/>
            <person name="Buerckstuemmer T."/>
            <person name="Bennett K.L."/>
            <person name="Superti-Furga G."/>
            <person name="Colinge J."/>
        </authorList>
    </citation>
    <scope>IDENTIFICATION BY MASS SPECTROMETRY [LARGE SCALE ANALYSIS]</scope>
</reference>
<reference key="7">
    <citation type="journal article" date="2012" name="Nat. Genet.">
        <title>Mutations in NNT encoding nicotinamide nucleotide transhydrogenase cause familial glucocorticoid deficiency.</title>
        <authorList>
            <person name="Meimaridou E."/>
            <person name="Kowalczyk J."/>
            <person name="Guasti L."/>
            <person name="Hughes C.R."/>
            <person name="Wagner F."/>
            <person name="Frommolt P."/>
            <person name="Nurnberg P."/>
            <person name="Mann N.P."/>
            <person name="Banerjee R."/>
            <person name="Saka H.N."/>
            <person name="Chapple J.P."/>
            <person name="King P.J."/>
            <person name="Clark A.J."/>
            <person name="Metherell L.A."/>
        </authorList>
    </citation>
    <scope>FUNCTION</scope>
    <scope>TISSUE SPECIFICITY</scope>
    <scope>VARIANTS GCCD4 ASN-193; ALA-357; PRO-365; LEU-437; VAL-533; ARG-664; ARG-678; ASP-862; PRO-977; PRO-1008 AND LYS-1009</scope>
</reference>
<reference key="8">
    <citation type="journal article" date="2014" name="J. Proteomics">
        <title>An enzyme assisted RP-RPLC approach for in-depth analysis of human liver phosphoproteome.</title>
        <authorList>
            <person name="Bian Y."/>
            <person name="Song C."/>
            <person name="Cheng K."/>
            <person name="Dong M."/>
            <person name="Wang F."/>
            <person name="Huang J."/>
            <person name="Sun D."/>
            <person name="Wang L."/>
            <person name="Ye M."/>
            <person name="Zou H."/>
        </authorList>
    </citation>
    <scope>IDENTIFICATION BY MASS SPECTROMETRY [LARGE SCALE ANALYSIS]</scope>
    <source>
        <tissue>Liver</tissue>
    </source>
</reference>
<reference key="9">
    <citation type="journal article" date="2015" name="Proteomics">
        <title>N-terminome analysis of the human mitochondrial proteome.</title>
        <authorList>
            <person name="Vaca Jacome A.S."/>
            <person name="Rabilloud T."/>
            <person name="Schaeffer-Reiss C."/>
            <person name="Rompais M."/>
            <person name="Ayoub D."/>
            <person name="Lane L."/>
            <person name="Bairoch A."/>
            <person name="Van Dorsselaer A."/>
            <person name="Carapito C."/>
        </authorList>
    </citation>
    <scope>IDENTIFICATION BY MASS SPECTROMETRY [LARGE SCALE ANALYSIS]</scope>
</reference>
<reference key="10">
    <citation type="journal article" date="2000" name="Structure">
        <title>The high-resolution structure of the NADP(H)-binding component (dIII) of proton-translocating transhydrogenase from human heart mitochondria.</title>
        <authorList>
            <person name="White S.A."/>
            <person name="Peake S.J."/>
            <person name="McSweeney S."/>
            <person name="Leonard G."/>
            <person name="Cotton N.P.J."/>
            <person name="Jackson J.B."/>
        </authorList>
    </citation>
    <scope>X-RAY CRYSTALLOGRAPHY (2.0 ANGSTROMS) OF 880-1086 IN COMPLEX WITH NADP</scope>
</reference>
<reference evidence="13" key="11">
    <citation type="journal article" date="2003" name="J. Biol. Chem.">
        <title>Interactions between transhydrogenase and thio-nicotinamide Analogues of NAD(H) and NADP(H) underline the importance of nucleotide conformational changes in coupling to proton translocation.</title>
        <authorList>
            <person name="Singh A."/>
            <person name="Venning J.D."/>
            <person name="Quirk P.G."/>
            <person name="van Boxel G.I."/>
            <person name="Rodrigues D.J."/>
            <person name="White S.A."/>
            <person name="Jackson J.B."/>
        </authorList>
    </citation>
    <scope>X-RAY CRYSTALLOGRAPHY (2.42 ANGSTROMS) OF 880-1086 IN COMPLEX WITH SUBSTRATE ANALOG</scope>
</reference>
<reference evidence="14" key="12">
    <citation type="journal article" date="2004" name="Biochemistry">
        <title>Active-site conformational changes associated with hydride transfer in proton-translocating transhydrogenase.</title>
        <authorList>
            <person name="Mather O.C."/>
            <person name="Singh A."/>
            <person name="van Boxel G.I."/>
            <person name="White S.A."/>
            <person name="Jackson J.B."/>
        </authorList>
    </citation>
    <scope>X-RAY CRYSTALLOGRAPHY (2.20 ANGSTROMS) OF 880-1086 IN COMPLEX WITH NADP</scope>
</reference>
<protein>
    <recommendedName>
        <fullName>NAD(P) transhydrogenase, mitochondrial</fullName>
        <ecNumber evidence="3">7.1.1.1</ecNumber>
    </recommendedName>
    <alternativeName>
        <fullName>Nicotinamide nucleotide transhydrogenase</fullName>
    </alternativeName>
    <alternativeName>
        <fullName>Pyridine nucleotide transhydrogenase</fullName>
    </alternativeName>
</protein>
<dbReference type="EC" id="7.1.1.1" evidence="3"/>
<dbReference type="EMBL" id="U40490">
    <property type="protein sequence ID" value="AAC51914.1"/>
    <property type="molecule type" value="mRNA"/>
</dbReference>
<dbReference type="EMBL" id="Z50101">
    <property type="protein sequence ID" value="CAA90428.1"/>
    <property type="molecule type" value="mRNA"/>
</dbReference>
<dbReference type="EMBL" id="AL831822">
    <property type="protein sequence ID" value="CAD38536.1"/>
    <property type="molecule type" value="mRNA"/>
</dbReference>
<dbReference type="EMBL" id="BC110543">
    <property type="protein sequence ID" value="AAI10544.1"/>
    <property type="molecule type" value="mRNA"/>
</dbReference>
<dbReference type="CCDS" id="CCDS3949.1"/>
<dbReference type="PIR" id="G02257">
    <property type="entry name" value="G02257"/>
</dbReference>
<dbReference type="RefSeq" id="NP_036475.3">
    <property type="nucleotide sequence ID" value="NM_012343.3"/>
</dbReference>
<dbReference type="RefSeq" id="NP_892022.2">
    <property type="nucleotide sequence ID" value="NM_182977.3"/>
</dbReference>
<dbReference type="RefSeq" id="XP_005248331.1">
    <property type="nucleotide sequence ID" value="XM_005248274.6"/>
</dbReference>
<dbReference type="RefSeq" id="XP_011512303.1">
    <property type="nucleotide sequence ID" value="XM_011514001.4"/>
</dbReference>
<dbReference type="RefSeq" id="XP_016864782.1">
    <property type="nucleotide sequence ID" value="XM_017009293.3"/>
</dbReference>
<dbReference type="RefSeq" id="XP_054208225.1">
    <property type="nucleotide sequence ID" value="XM_054352250.1"/>
</dbReference>
<dbReference type="RefSeq" id="XP_054208226.1">
    <property type="nucleotide sequence ID" value="XM_054352251.1"/>
</dbReference>
<dbReference type="RefSeq" id="XP_054208227.1">
    <property type="nucleotide sequence ID" value="XM_054352252.1"/>
</dbReference>
<dbReference type="PDB" id="1DJL">
    <property type="method" value="X-ray"/>
    <property type="resolution" value="2.00 A"/>
    <property type="chains" value="A/B=880-1086"/>
</dbReference>
<dbReference type="PDB" id="1PT9">
    <property type="method" value="X-ray"/>
    <property type="resolution" value="2.42 A"/>
    <property type="chains" value="A/B=880-1086"/>
</dbReference>
<dbReference type="PDB" id="1U31">
    <property type="method" value="X-ray"/>
    <property type="resolution" value="2.20 A"/>
    <property type="chains" value="A/B=880-1086"/>
</dbReference>
<dbReference type="PDBsum" id="1DJL"/>
<dbReference type="PDBsum" id="1PT9"/>
<dbReference type="PDBsum" id="1U31"/>
<dbReference type="SMR" id="Q13423"/>
<dbReference type="BioGRID" id="117076">
    <property type="interactions" value="196"/>
</dbReference>
<dbReference type="FunCoup" id="Q13423">
    <property type="interactions" value="560"/>
</dbReference>
<dbReference type="IntAct" id="Q13423">
    <property type="interactions" value="56"/>
</dbReference>
<dbReference type="MINT" id="Q13423"/>
<dbReference type="STRING" id="9606.ENSP00000264663"/>
<dbReference type="DrugBank" id="DB01763">
    <property type="generic name" value="7-thionicotinamide-adenine-dinucleotide phosphate"/>
</dbReference>
<dbReference type="DrugBank" id="DB00157">
    <property type="generic name" value="NADH"/>
</dbReference>
<dbReference type="DrugBank" id="DB03461">
    <property type="generic name" value="Nicotinamide adenine dinucleotide phosphate"/>
</dbReference>
<dbReference type="DrugBank" id="DB09072">
    <property type="generic name" value="Sodium oxybate"/>
</dbReference>
<dbReference type="DrugBank" id="DB09092">
    <property type="generic name" value="Xanthinol"/>
</dbReference>
<dbReference type="CarbonylDB" id="Q13423"/>
<dbReference type="GlyGen" id="Q13423">
    <property type="glycosylation" value="2 sites, 1 O-linked glycan (1 site)"/>
</dbReference>
<dbReference type="iPTMnet" id="Q13423"/>
<dbReference type="MetOSite" id="Q13423"/>
<dbReference type="PhosphoSitePlus" id="Q13423"/>
<dbReference type="SwissPalm" id="Q13423"/>
<dbReference type="BioMuta" id="NNT"/>
<dbReference type="DMDM" id="51338801"/>
<dbReference type="jPOST" id="Q13423"/>
<dbReference type="MassIVE" id="Q13423"/>
<dbReference type="PaxDb" id="9606-ENSP00000264663"/>
<dbReference type="PeptideAtlas" id="Q13423"/>
<dbReference type="ProteomicsDB" id="59408"/>
<dbReference type="Pumba" id="Q13423"/>
<dbReference type="Antibodypedia" id="1369">
    <property type="antibodies" value="164 antibodies from 29 providers"/>
</dbReference>
<dbReference type="DNASU" id="23530"/>
<dbReference type="Ensembl" id="ENST00000264663.9">
    <property type="protein sequence ID" value="ENSP00000264663.5"/>
    <property type="gene ID" value="ENSG00000112992.18"/>
</dbReference>
<dbReference type="Ensembl" id="ENST00000344920.9">
    <property type="protein sequence ID" value="ENSP00000343873.4"/>
    <property type="gene ID" value="ENSG00000112992.18"/>
</dbReference>
<dbReference type="Ensembl" id="ENST00000653251.1">
    <property type="protein sequence ID" value="ENSP00000499281.1"/>
    <property type="gene ID" value="ENSG00000112992.18"/>
</dbReference>
<dbReference type="Ensembl" id="ENST00000656666.1">
    <property type="protein sequence ID" value="ENSP00000499249.1"/>
    <property type="gene ID" value="ENSG00000112992.18"/>
</dbReference>
<dbReference type="Ensembl" id="ENST00000662525.1">
    <property type="protein sequence ID" value="ENSP00000499639.1"/>
    <property type="gene ID" value="ENSG00000112992.18"/>
</dbReference>
<dbReference type="Ensembl" id="ENST00000669601.1">
    <property type="protein sequence ID" value="ENSP00000499527.1"/>
    <property type="gene ID" value="ENSG00000112992.18"/>
</dbReference>
<dbReference type="Ensembl" id="ENST00000670904.1">
    <property type="protein sequence ID" value="ENSP00000499611.1"/>
    <property type="gene ID" value="ENSG00000112992.18"/>
</dbReference>
<dbReference type="Ensembl" id="ENST00000671668.1">
    <property type="protein sequence ID" value="ENSP00000499494.1"/>
    <property type="gene ID" value="ENSG00000112992.18"/>
</dbReference>
<dbReference type="GeneID" id="23530"/>
<dbReference type="KEGG" id="hsa:23530"/>
<dbReference type="MANE-Select" id="ENST00000344920.9">
    <property type="protein sequence ID" value="ENSP00000343873.4"/>
    <property type="RefSeq nucleotide sequence ID" value="NM_182977.3"/>
    <property type="RefSeq protein sequence ID" value="NP_892022.2"/>
</dbReference>
<dbReference type="UCSC" id="uc003joe.4">
    <property type="organism name" value="human"/>
</dbReference>
<dbReference type="AGR" id="HGNC:7863"/>
<dbReference type="CTD" id="23530"/>
<dbReference type="DisGeNET" id="23530"/>
<dbReference type="GeneCards" id="NNT"/>
<dbReference type="HGNC" id="HGNC:7863">
    <property type="gene designation" value="NNT"/>
</dbReference>
<dbReference type="HPA" id="ENSG00000112992">
    <property type="expression patterns" value="Tissue enhanced (skeletal muscle, tongue)"/>
</dbReference>
<dbReference type="MalaCards" id="NNT"/>
<dbReference type="MIM" id="607878">
    <property type="type" value="gene"/>
</dbReference>
<dbReference type="MIM" id="614736">
    <property type="type" value="phenotype"/>
</dbReference>
<dbReference type="neXtProt" id="NX_Q13423"/>
<dbReference type="OpenTargets" id="ENSG00000112992"/>
<dbReference type="Orphanet" id="361">
    <property type="disease" value="Familial glucocorticoid deficiency"/>
</dbReference>
<dbReference type="PharmGKB" id="PA31667"/>
<dbReference type="VEuPathDB" id="HostDB:ENSG00000112992"/>
<dbReference type="eggNOG" id="ENOG502QQ0A">
    <property type="taxonomic scope" value="Eukaryota"/>
</dbReference>
<dbReference type="GeneTree" id="ENSGT00390000004624"/>
<dbReference type="HOGENOM" id="CLU_003376_1_0_1"/>
<dbReference type="InParanoid" id="Q13423"/>
<dbReference type="OMA" id="EQCREVD"/>
<dbReference type="OrthoDB" id="37244at2759"/>
<dbReference type="PAN-GO" id="Q13423">
    <property type="GO annotations" value="4 GO annotations based on evolutionary models"/>
</dbReference>
<dbReference type="PhylomeDB" id="Q13423"/>
<dbReference type="TreeFam" id="TF300636"/>
<dbReference type="BioCyc" id="MetaCyc:HS03639-MONOMER"/>
<dbReference type="BRENDA" id="1.6.1.2">
    <property type="organism ID" value="2681"/>
</dbReference>
<dbReference type="BRENDA" id="7.1.1.1">
    <property type="organism ID" value="2681"/>
</dbReference>
<dbReference type="PathwayCommons" id="Q13423"/>
<dbReference type="Reactome" id="R-HSA-71403">
    <property type="pathway name" value="Citric acid cycle (TCA cycle)"/>
</dbReference>
<dbReference type="SignaLink" id="Q13423"/>
<dbReference type="BioGRID-ORCS" id="23530">
    <property type="hits" value="16 hits in 1165 CRISPR screens"/>
</dbReference>
<dbReference type="CD-CODE" id="FB4E32DD">
    <property type="entry name" value="Presynaptic clusters and postsynaptic densities"/>
</dbReference>
<dbReference type="ChiTaRS" id="NNT">
    <property type="organism name" value="human"/>
</dbReference>
<dbReference type="EvolutionaryTrace" id="Q13423"/>
<dbReference type="GeneWiki" id="NNT_(gene)"/>
<dbReference type="GenomeRNAi" id="23530"/>
<dbReference type="Pharos" id="Q13423">
    <property type="development level" value="Tbio"/>
</dbReference>
<dbReference type="PRO" id="PR:Q13423"/>
<dbReference type="Proteomes" id="UP000005640">
    <property type="component" value="Chromosome 5"/>
</dbReference>
<dbReference type="RNAct" id="Q13423">
    <property type="molecule type" value="protein"/>
</dbReference>
<dbReference type="Bgee" id="ENSG00000112992">
    <property type="expression patterns" value="Expressed in heart right ventricle and 194 other cell types or tissues"/>
</dbReference>
<dbReference type="ExpressionAtlas" id="Q13423">
    <property type="expression patterns" value="baseline and differential"/>
</dbReference>
<dbReference type="GO" id="GO:0016020">
    <property type="term" value="C:membrane"/>
    <property type="evidence" value="ECO:0007005"/>
    <property type="project" value="UniProtKB"/>
</dbReference>
<dbReference type="GO" id="GO:0005743">
    <property type="term" value="C:mitochondrial inner membrane"/>
    <property type="evidence" value="ECO:0000304"/>
    <property type="project" value="UniProtKB"/>
</dbReference>
<dbReference type="GO" id="GO:0005739">
    <property type="term" value="C:mitochondrion"/>
    <property type="evidence" value="ECO:0000314"/>
    <property type="project" value="LIFEdb"/>
</dbReference>
<dbReference type="GO" id="GO:0098803">
    <property type="term" value="C:respiratory chain complex"/>
    <property type="evidence" value="ECO:0000304"/>
    <property type="project" value="UniProtKB"/>
</dbReference>
<dbReference type="GO" id="GO:0051287">
    <property type="term" value="F:NAD binding"/>
    <property type="evidence" value="ECO:0000304"/>
    <property type="project" value="UniProtKB"/>
</dbReference>
<dbReference type="GO" id="GO:0003957">
    <property type="term" value="F:NAD(P)+ transhydrogenase (Si-specific) activity"/>
    <property type="evidence" value="ECO:0000304"/>
    <property type="project" value="UniProtKB"/>
</dbReference>
<dbReference type="GO" id="GO:0050661">
    <property type="term" value="F:NADP binding"/>
    <property type="evidence" value="ECO:0000314"/>
    <property type="project" value="UniProtKB"/>
</dbReference>
<dbReference type="GO" id="GO:0008750">
    <property type="term" value="F:proton-translocating NAD(P)+ transhydrogenase activity"/>
    <property type="evidence" value="ECO:0007669"/>
    <property type="project" value="UniProtKB-EC"/>
</dbReference>
<dbReference type="GO" id="GO:0045454">
    <property type="term" value="P:cell redox homeostasis"/>
    <property type="evidence" value="ECO:0007669"/>
    <property type="project" value="Ensembl"/>
</dbReference>
<dbReference type="GO" id="GO:0098869">
    <property type="term" value="P:cellular oxidant detoxification"/>
    <property type="evidence" value="ECO:0007669"/>
    <property type="project" value="Ensembl"/>
</dbReference>
<dbReference type="GO" id="GO:0032364">
    <property type="term" value="P:intracellular oxygen homeostasis"/>
    <property type="evidence" value="ECO:0007669"/>
    <property type="project" value="Ensembl"/>
</dbReference>
<dbReference type="GO" id="GO:0006740">
    <property type="term" value="P:NADPH regeneration"/>
    <property type="evidence" value="ECO:0000318"/>
    <property type="project" value="GO_Central"/>
</dbReference>
<dbReference type="GO" id="GO:0043066">
    <property type="term" value="P:negative regulation of apoptotic process"/>
    <property type="evidence" value="ECO:0007669"/>
    <property type="project" value="Ensembl"/>
</dbReference>
<dbReference type="GO" id="GO:1903285">
    <property type="term" value="P:positive regulation of hydrogen peroxide catabolic process"/>
    <property type="evidence" value="ECO:0007669"/>
    <property type="project" value="Ensembl"/>
</dbReference>
<dbReference type="GO" id="GO:0010918">
    <property type="term" value="P:positive regulation of mitochondrial membrane potential"/>
    <property type="evidence" value="ECO:0007669"/>
    <property type="project" value="Ensembl"/>
</dbReference>
<dbReference type="GO" id="GO:1902600">
    <property type="term" value="P:proton transmembrane transport"/>
    <property type="evidence" value="ECO:0000304"/>
    <property type="project" value="UniProtKB"/>
</dbReference>
<dbReference type="GO" id="GO:0072593">
    <property type="term" value="P:reactive oxygen species metabolic process"/>
    <property type="evidence" value="ECO:0000315"/>
    <property type="project" value="UniProtKB"/>
</dbReference>
<dbReference type="GO" id="GO:0033273">
    <property type="term" value="P:response to vitamin"/>
    <property type="evidence" value="ECO:0007669"/>
    <property type="project" value="Ensembl"/>
</dbReference>
<dbReference type="GO" id="GO:0006099">
    <property type="term" value="P:tricarboxylic acid cycle"/>
    <property type="evidence" value="ECO:0000304"/>
    <property type="project" value="UniProtKB"/>
</dbReference>
<dbReference type="CDD" id="cd05304">
    <property type="entry name" value="Rubrum_tdh"/>
    <property type="match status" value="1"/>
</dbReference>
<dbReference type="FunFam" id="3.40.50.720:FF:000028">
    <property type="entry name" value="NAD(P) transhydrogenase subunit alpha"/>
    <property type="match status" value="1"/>
</dbReference>
<dbReference type="FunFam" id="3.40.50.1220:FF:000002">
    <property type="entry name" value="NAD(P) transhydrogenase subunit beta"/>
    <property type="match status" value="1"/>
</dbReference>
<dbReference type="Gene3D" id="3.40.50.720">
    <property type="entry name" value="NAD(P)-binding Rossmann-like Domain"/>
    <property type="match status" value="2"/>
</dbReference>
<dbReference type="Gene3D" id="3.40.50.1220">
    <property type="entry name" value="TPP-binding domain"/>
    <property type="match status" value="1"/>
</dbReference>
<dbReference type="InterPro" id="IPR008143">
    <property type="entry name" value="Ala_DH/PNT_CS2"/>
</dbReference>
<dbReference type="InterPro" id="IPR008142">
    <property type="entry name" value="AlaDH/PNT_CS1"/>
</dbReference>
<dbReference type="InterPro" id="IPR007886">
    <property type="entry name" value="AlaDH/PNT_N"/>
</dbReference>
<dbReference type="InterPro" id="IPR007698">
    <property type="entry name" value="AlaDH/PNT_NAD(H)-bd"/>
</dbReference>
<dbReference type="InterPro" id="IPR029035">
    <property type="entry name" value="DHS-like_NAD/FAD-binding_dom"/>
</dbReference>
<dbReference type="InterPro" id="IPR036291">
    <property type="entry name" value="NAD(P)-bd_dom_sf"/>
</dbReference>
<dbReference type="InterPro" id="IPR026255">
    <property type="entry name" value="NADP_transhyd_a"/>
</dbReference>
<dbReference type="InterPro" id="IPR024605">
    <property type="entry name" value="NADP_transhyd_a_C"/>
</dbReference>
<dbReference type="InterPro" id="IPR034300">
    <property type="entry name" value="PNTB-like"/>
</dbReference>
<dbReference type="NCBIfam" id="TIGR00561">
    <property type="entry name" value="pntA"/>
    <property type="match status" value="1"/>
</dbReference>
<dbReference type="NCBIfam" id="NF006942">
    <property type="entry name" value="PRK09424.1"/>
    <property type="match status" value="1"/>
</dbReference>
<dbReference type="PANTHER" id="PTHR10160">
    <property type="entry name" value="NAD(P) TRANSHYDROGENASE"/>
    <property type="match status" value="1"/>
</dbReference>
<dbReference type="PANTHER" id="PTHR10160:SF22">
    <property type="entry name" value="NAD(P) TRANSHYDROGENASE, MITOCHONDRIAL"/>
    <property type="match status" value="1"/>
</dbReference>
<dbReference type="Pfam" id="PF01262">
    <property type="entry name" value="AlaDh_PNT_C"/>
    <property type="match status" value="1"/>
</dbReference>
<dbReference type="Pfam" id="PF05222">
    <property type="entry name" value="AlaDh_PNT_N"/>
    <property type="match status" value="1"/>
</dbReference>
<dbReference type="Pfam" id="PF02233">
    <property type="entry name" value="PNTB"/>
    <property type="match status" value="1"/>
</dbReference>
<dbReference type="Pfam" id="PF12769">
    <property type="entry name" value="PNTB_4TM"/>
    <property type="match status" value="1"/>
</dbReference>
<dbReference type="SMART" id="SM01002">
    <property type="entry name" value="AlaDh_PNT_C"/>
    <property type="match status" value="1"/>
</dbReference>
<dbReference type="SMART" id="SM01003">
    <property type="entry name" value="AlaDh_PNT_N"/>
    <property type="match status" value="1"/>
</dbReference>
<dbReference type="SUPFAM" id="SSF52467">
    <property type="entry name" value="DHS-like NAD/FAD-binding domain"/>
    <property type="match status" value="1"/>
</dbReference>
<dbReference type="SUPFAM" id="SSF52283">
    <property type="entry name" value="Formate/glycerate dehydrogenase catalytic domain-like"/>
    <property type="match status" value="1"/>
</dbReference>
<dbReference type="SUPFAM" id="SSF51735">
    <property type="entry name" value="NAD(P)-binding Rossmann-fold domains"/>
    <property type="match status" value="1"/>
</dbReference>
<dbReference type="PROSITE" id="PS00836">
    <property type="entry name" value="ALADH_PNT_1"/>
    <property type="match status" value="1"/>
</dbReference>
<dbReference type="PROSITE" id="PS00837">
    <property type="entry name" value="ALADH_PNT_2"/>
    <property type="match status" value="1"/>
</dbReference>
<proteinExistence type="evidence at protein level"/>
<keyword id="KW-0002">3D-structure</keyword>
<keyword id="KW-0007">Acetylation</keyword>
<keyword id="KW-0225">Disease variant</keyword>
<keyword id="KW-0472">Membrane</keyword>
<keyword id="KW-0496">Mitochondrion</keyword>
<keyword id="KW-0999">Mitochondrion inner membrane</keyword>
<keyword id="KW-0520">NAD</keyword>
<keyword id="KW-0521">NADP</keyword>
<keyword id="KW-0547">Nucleotide-binding</keyword>
<keyword id="KW-1267">Proteomics identification</keyword>
<keyword id="KW-1185">Reference proteome</keyword>
<keyword id="KW-0809">Transit peptide</keyword>
<keyword id="KW-1278">Translocase</keyword>
<keyword id="KW-0812">Transmembrane</keyword>
<keyword id="KW-1133">Transmembrane helix</keyword>
<gene>
    <name type="primary">NNT</name>
</gene>
<sequence length="1086" mass="113896">MANLLKTVVTGCSCPLLSNLGSCKGLRVKKDFLRTFYTHQELWCKAPVKPGIPYKQLTVGVPKEIFQNEKRVALSPAGVQNLVKQGFNVVVESGAGEASKFSDDHYRVAGAQIQGAKEVLASDLVVKVRAPMVNPTLGVHEADLLKTSGTLISFIYPAQNPELLNKLSQRKTTVLAMDQVPRVTIAQGYDALSSMANIAGYKAVVLAANHFGRFFTGQITAAGKVPPAKILIVGGGVAGLASAGAAKSMGAIVRGFDTRAAALEQFKSLGAEPLEVDLKESGEGQGGYAKEMSKEFIEAEMKLFAQQCKEVDILISTALIPGKKAPVLFNKEMIESMKEGSVVVDLAAEAGGNFETTKPGELYIHKGITHIGYTDLPSRMATQASTLYSNNITKLLKAISPDKDNFYFDVKDDFDFGTMGHVIRGTVVMKDGKVIFPAPTPKNIPQGAPVKQKTVAELEAEKAATITPFRKTMSTASAYTAGLTGILGLGIAAPNLAFSQMVTTFGLAGIVGYHTVWGVTPALHSPLMSVTNAISGLTAVGGLALMGGHLYPSTTSQGLAALAAFISSVNIAGGFLVTQRMLDMFKRPTDPPEYNYLYLLPAGTFVGGYLAALYSGYNIEQIMYLGSGLCCVGALAGLSTQGTARLGNALGMIGVAGGLAATLGVLKPGPELLAQMSGAMALGGTIGLTIAKRIQISDLPQLVAAFHSLVGLAAVLTCIAEYIIEYPHFATDAAANLTKIVAYLGTYIGGVTFSGSLIAYGKLQGLLKSAPLLLPGRHLLNAGLLAASVGGIIPFMVDPSFTTGITCLGSVSALSAVMGVTLTAAIGGADMPVVITVLNSYSGWALCAEGFLLNNNLLTIVGALIGSSGAILSYIMCVAMNRSLANVILGGYGTTSTAGGKPMEISGTHTEINLDNAIDMIREANSIIITPGYGLCAAKAQYPIADLVKMLTEQGKKVRFGIHPVAGRMPGQLNVLLAEAGVPYDIVLEMDEINHDFPDTDLVLVIGANDTVNSAAQEDPNSIIAGMPVLEVWKSKQVIVMKRSLGVGYAAVDNPIFYKPNTAMLLGDAKKTCDALQAKVRESYQK</sequence>
<accession>Q13423</accession>
<accession>Q16796</accession>
<accession>Q2TB60</accession>
<accession>Q8N3V4</accession>